<feature type="chain" id="PRO_0000168087" description="Glyoxalase I">
    <location>
        <begin position="1"/>
        <end position="326"/>
    </location>
</feature>
<feature type="domain" description="VOC 1" evidence="3">
    <location>
        <begin position="22"/>
        <end position="167"/>
    </location>
</feature>
<feature type="domain" description="VOC 2" evidence="3">
    <location>
        <begin position="182"/>
        <end position="322"/>
    </location>
</feature>
<feature type="active site" description="Proton donor/acceptor" evidence="4">
    <location>
        <position position="163"/>
    </location>
</feature>
<feature type="active site" description="Proton donor/acceptor" evidence="4">
    <location>
        <position position="318"/>
    </location>
</feature>
<feature type="binding site" evidence="1">
    <location>
        <position position="25"/>
    </location>
    <ligand>
        <name>Zn(2+)</name>
        <dbReference type="ChEBI" id="CHEBI:29105"/>
        <note>ligand shared between dimeric partners</note>
    </ligand>
</feature>
<feature type="binding site" evidence="2">
    <location>
        <position position="29"/>
    </location>
    <ligand>
        <name>substrate</name>
        <note>ligand shared between dimeric partners</note>
    </ligand>
</feature>
<feature type="binding site" evidence="2">
    <location>
        <position position="89"/>
    </location>
    <ligand>
        <name>Zn(2+)</name>
        <dbReference type="ChEBI" id="CHEBI:29105"/>
        <note>ligand shared between dimeric partners</note>
    </ligand>
</feature>
<feature type="binding site" evidence="2">
    <location>
        <position position="93"/>
    </location>
    <ligand>
        <name>substrate</name>
        <note>ligand shared between dimeric partners</note>
    </ligand>
</feature>
<feature type="binding site" description="in other chain" evidence="2">
    <location>
        <position position="113"/>
    </location>
    <ligand>
        <name>substrate</name>
        <note>ligand shared between dimeric partners</note>
    </ligand>
</feature>
<feature type="binding site" description="in other chain" evidence="2">
    <location>
        <position position="117"/>
    </location>
    <ligand>
        <name>substrate</name>
        <note>ligand shared between dimeric partners</note>
    </ligand>
</feature>
<feature type="binding site" description="in other chain" evidence="2">
    <location>
        <position position="117"/>
    </location>
    <ligand>
        <name>Zn(2+)</name>
        <dbReference type="ChEBI" id="CHEBI:29105"/>
        <note>ligand shared between dimeric partners</note>
    </ligand>
</feature>
<feature type="binding site" description="in other chain" evidence="2">
    <location>
        <begin position="147"/>
        <end position="148"/>
    </location>
    <ligand>
        <name>substrate</name>
        <note>ligand shared between dimeric partners</note>
    </ligand>
</feature>
<feature type="binding site" description="in other chain" evidence="2">
    <location>
        <position position="163"/>
    </location>
    <ligand>
        <name>Zn(2+)</name>
        <dbReference type="ChEBI" id="CHEBI:29105"/>
        <note>ligand shared between dimeric partners</note>
    </ligand>
</feature>
<feature type="sequence conflict" description="In Ref. 2; CAC16163." evidence="8" ref="2">
    <original>T</original>
    <variation>A</variation>
    <location>
        <position position="36"/>
    </location>
</feature>
<feature type="sequence conflict" description="In Ref. 2; CAC16163 and 5; AA sequence." evidence="8" ref="2 5">
    <original>G</original>
    <variation>D</variation>
    <location>
        <position position="156"/>
    </location>
</feature>
<feature type="sequence conflict" description="In Ref. 2; CAC16163." evidence="8" ref="2">
    <original>H</original>
    <variation>Y</variation>
    <location>
        <position position="322"/>
    </location>
</feature>
<protein>
    <recommendedName>
        <fullName evidence="7">Glyoxalase I</fullName>
        <shortName evidence="7">Glx I</shortName>
        <ecNumber evidence="4 6">4.4.1.5</ecNumber>
    </recommendedName>
    <alternativeName>
        <fullName evidence="8">Aldoketomutase</fullName>
    </alternativeName>
    <alternativeName>
        <fullName evidence="8">Ketone-aldehyde mutase</fullName>
    </alternativeName>
    <alternativeName>
        <fullName>Methylglyoxalase</fullName>
    </alternativeName>
    <alternativeName>
        <fullName>S-D-lactoylglutathione methylglyoxal lyase</fullName>
    </alternativeName>
    <alternativeName>
        <fullName>actoylglutathione lyase</fullName>
    </alternativeName>
</protein>
<accession>P50107</accession>
<accession>D6VZH1</accession>
<accession>Q9HFG0</accession>
<accession>Q9URB5</accession>
<gene>
    <name evidence="7" type="primary">GLO1</name>
    <name type="ordered locus">YML004C</name>
    <name type="ORF">YM9571.15C</name>
</gene>
<reference key="1">
    <citation type="journal article" date="1996" name="J. Biol. Chem.">
        <title>Identification of the structural gene for glyoxalase I from Saccharomyces cerevisiae.</title>
        <authorList>
            <person name="Inoue Y."/>
            <person name="Kimura A."/>
        </authorList>
    </citation>
    <scope>NUCLEOTIDE SEQUENCE [GENOMIC DNA]</scope>
    <scope>FUNCTION</scope>
    <scope>CATALYTIC ACTIVITY</scope>
    <scope>BIOPHYSICOCHEMICAL PROPERTIES</scope>
    <scope>PATHWAY</scope>
    <source>
        <strain>ATCC 204508 / S288c</strain>
    </source>
</reference>
<reference key="2">
    <citation type="journal article" date="2001" name="J. Biol. Chem.">
        <title>Yeast glyoxalase I is a monomeric enzyme with two active sites.</title>
        <authorList>
            <person name="Frickel E.M."/>
            <person name="Jemth P."/>
            <person name="Widersten M."/>
            <person name="Mannervik B."/>
        </authorList>
    </citation>
    <scope>NUCLEOTIDE SEQUENCE [GENOMIC DNA]</scope>
    <scope>FUNCTION</scope>
    <scope>CATALYTIC ACTIVITY</scope>
    <scope>BIOPHYSICOCHEMICAL PROPERTIES</scope>
    <scope>ACTIVE SITE</scope>
    <scope>SUBUNIT</scope>
    <scope>PATHWAY</scope>
</reference>
<reference key="3">
    <citation type="journal article" date="1997" name="Nature">
        <title>The nucleotide sequence of Saccharomyces cerevisiae chromosome XIII.</title>
        <authorList>
            <person name="Bowman S."/>
            <person name="Churcher C.M."/>
            <person name="Badcock K."/>
            <person name="Brown D."/>
            <person name="Chillingworth T."/>
            <person name="Connor R."/>
            <person name="Dedman K."/>
            <person name="Devlin K."/>
            <person name="Gentles S."/>
            <person name="Hamlin N."/>
            <person name="Hunt S."/>
            <person name="Jagels K."/>
            <person name="Lye G."/>
            <person name="Moule S."/>
            <person name="Odell C."/>
            <person name="Pearson D."/>
            <person name="Rajandream M.A."/>
            <person name="Rice P."/>
            <person name="Skelton J."/>
            <person name="Walsh S.V."/>
            <person name="Whitehead S."/>
            <person name="Barrell B.G."/>
        </authorList>
    </citation>
    <scope>NUCLEOTIDE SEQUENCE [LARGE SCALE GENOMIC DNA]</scope>
    <source>
        <strain>ATCC 204508 / S288c</strain>
    </source>
</reference>
<reference key="4">
    <citation type="journal article" date="2014" name="G3 (Bethesda)">
        <title>The reference genome sequence of Saccharomyces cerevisiae: Then and now.</title>
        <authorList>
            <person name="Engel S.R."/>
            <person name="Dietrich F.S."/>
            <person name="Fisk D.G."/>
            <person name="Binkley G."/>
            <person name="Balakrishnan R."/>
            <person name="Costanzo M.C."/>
            <person name="Dwight S.S."/>
            <person name="Hitz B.C."/>
            <person name="Karra K."/>
            <person name="Nash R.S."/>
            <person name="Weng S."/>
            <person name="Wong E.D."/>
            <person name="Lloyd P."/>
            <person name="Skrzypek M.S."/>
            <person name="Miyasato S.R."/>
            <person name="Simison M."/>
            <person name="Cherry J.M."/>
        </authorList>
    </citation>
    <scope>GENOME REANNOTATION</scope>
    <source>
        <strain>ATCC 204508 / S288c</strain>
    </source>
</reference>
<reference key="5">
    <citation type="journal article" date="1991" name="Biotechnol. Appl. Biochem.">
        <title>Positive effect of GAC gene product on the mRNA level of glyoxalase I gene in Saccharomyces cerevisiae.</title>
        <authorList>
            <person name="Inoue Y."/>
            <person name="Yano H."/>
            <person name="Ginya H."/>
            <person name="Tsuchiyama H."/>
            <person name="Murata K."/>
            <person name="Kimura A."/>
        </authorList>
    </citation>
    <scope>NUCLEOTIDE SEQUENCE [GENOMIC DNA] OF 310-326</scope>
    <scope>PROTEIN SEQUENCE OF 39-45; 150-165 AND 311-323</scope>
    <source>
        <strain>ATCC 26109 / X2180</strain>
    </source>
</reference>
<reference key="6">
    <citation type="journal article" date="1996" name="Biochem. J.">
        <title>The primary structure of monomeric yeast glyoxalase I indicates a gene duplication resulting in two similar segments homologous with the subunit of dimeric human glyoxalase I.</title>
        <authorList>
            <person name="Ridderstroem M."/>
            <person name="Mannervik B."/>
        </authorList>
    </citation>
    <scope>DISCUSSION OF SEQUENCE</scope>
</reference>
<reference key="7">
    <citation type="journal article" date="2003" name="Nature">
        <title>Global analysis of protein expression in yeast.</title>
        <authorList>
            <person name="Ghaemmaghami S."/>
            <person name="Huh W.-K."/>
            <person name="Bower K."/>
            <person name="Howson R.W."/>
            <person name="Belle A."/>
            <person name="Dephoure N."/>
            <person name="O'Shea E.K."/>
            <person name="Weissman J.S."/>
        </authorList>
    </citation>
    <scope>LEVEL OF PROTEIN EXPRESSION [LARGE SCALE ANALYSIS]</scope>
</reference>
<evidence type="ECO:0000250" key="1"/>
<evidence type="ECO:0000250" key="2">
    <source>
        <dbReference type="UniProtKB" id="Q04760"/>
    </source>
</evidence>
<evidence type="ECO:0000255" key="3">
    <source>
        <dbReference type="PROSITE-ProRule" id="PRU01163"/>
    </source>
</evidence>
<evidence type="ECO:0000269" key="4">
    <source>
    </source>
</evidence>
<evidence type="ECO:0000269" key="5">
    <source>
    </source>
</evidence>
<evidence type="ECO:0000269" key="6">
    <source>
    </source>
</evidence>
<evidence type="ECO:0000303" key="7">
    <source>
    </source>
</evidence>
<evidence type="ECO:0000305" key="8"/>
<comment type="function">
    <text evidence="4 6">Catalyzes the conversion of hemimercaptal, formed from methylglyoxal and glutathione, to S-lactoylglutathione (PubMed:11050082, PubMed:8824231). Can use gamma-glutamylcysteine as a substrate (PubMed:8824231).</text>
</comment>
<comment type="catalytic activity">
    <reaction evidence="4 6">
        <text>(R)-S-lactoylglutathione = methylglyoxal + glutathione</text>
        <dbReference type="Rhea" id="RHEA:19069"/>
        <dbReference type="ChEBI" id="CHEBI:17158"/>
        <dbReference type="ChEBI" id="CHEBI:57474"/>
        <dbReference type="ChEBI" id="CHEBI:57925"/>
        <dbReference type="EC" id="4.4.1.5"/>
    </reaction>
</comment>
<comment type="cofactor">
    <cofactor evidence="2">
        <name>Zn(2+)</name>
        <dbReference type="ChEBI" id="CHEBI:29105"/>
    </cofactor>
    <text evidence="2">Binds 1 zinc ion per subunit.</text>
</comment>
<comment type="biophysicochemical properties">
    <kinetics>
        <KM evidence="6">0.41 mM for glutathione</KM>
        <KM evidence="6">1.2 mM for gamma-glutamylcysteine</KM>
    </kinetics>
</comment>
<comment type="pathway">
    <text evidence="4 6">Secondary metabolite metabolism; methylglyoxal degradation; (R)-lactate from methylglyoxal: step 1/2.</text>
</comment>
<comment type="subunit">
    <text evidence="4">Monomer.</text>
</comment>
<comment type="miscellaneous">
    <text evidence="5">Present with 2570 molecules/cell in log phase SD medium.</text>
</comment>
<comment type="similarity">
    <text evidence="8">Belongs to the glyoxalase I family.</text>
</comment>
<name>LGUL_YEAST</name>
<keyword id="KW-0903">Direct protein sequencing</keyword>
<keyword id="KW-0456">Lyase</keyword>
<keyword id="KW-0479">Metal-binding</keyword>
<keyword id="KW-1185">Reference proteome</keyword>
<keyword id="KW-0677">Repeat</keyword>
<keyword id="KW-0862">Zinc</keyword>
<proteinExistence type="evidence at protein level"/>
<dbReference type="EC" id="4.4.1.5" evidence="4 6"/>
<dbReference type="EMBL" id="X99240">
    <property type="protein sequence ID" value="CAA67622.1"/>
    <property type="molecule type" value="Genomic_DNA"/>
</dbReference>
<dbReference type="EMBL" id="AJ297938">
    <property type="protein sequence ID" value="CAC16163.1"/>
    <property type="molecule type" value="Genomic_DNA"/>
</dbReference>
<dbReference type="EMBL" id="Z49810">
    <property type="protein sequence ID" value="CAA89948.1"/>
    <property type="molecule type" value="Genomic_DNA"/>
</dbReference>
<dbReference type="EMBL" id="S80483">
    <property type="protein sequence ID" value="AAB21302.1"/>
    <property type="molecule type" value="Genomic_DNA"/>
</dbReference>
<dbReference type="EMBL" id="BK006946">
    <property type="protein sequence ID" value="DAA09895.1"/>
    <property type="molecule type" value="Genomic_DNA"/>
</dbReference>
<dbReference type="PIR" id="S55115">
    <property type="entry name" value="S55115"/>
</dbReference>
<dbReference type="RefSeq" id="NP_013710.1">
    <property type="nucleotide sequence ID" value="NM_001182359.1"/>
</dbReference>
<dbReference type="SMR" id="P50107"/>
<dbReference type="BioGRID" id="35167">
    <property type="interactions" value="53"/>
</dbReference>
<dbReference type="FunCoup" id="P50107">
    <property type="interactions" value="291"/>
</dbReference>
<dbReference type="IntAct" id="P50107">
    <property type="interactions" value="4"/>
</dbReference>
<dbReference type="STRING" id="4932.YML004C"/>
<dbReference type="BindingDB" id="P50107"/>
<dbReference type="ChEMBL" id="CHEMBL6057"/>
<dbReference type="iPTMnet" id="P50107"/>
<dbReference type="PaxDb" id="4932-YML004C"/>
<dbReference type="PeptideAtlas" id="P50107"/>
<dbReference type="EnsemblFungi" id="YML004C_mRNA">
    <property type="protein sequence ID" value="YML004C"/>
    <property type="gene ID" value="YML004C"/>
</dbReference>
<dbReference type="GeneID" id="855009"/>
<dbReference type="KEGG" id="sce:YML004C"/>
<dbReference type="AGR" id="SGD:S000004463"/>
<dbReference type="SGD" id="S000004463">
    <property type="gene designation" value="GLO1"/>
</dbReference>
<dbReference type="VEuPathDB" id="FungiDB:YML004C"/>
<dbReference type="eggNOG" id="KOG2944">
    <property type="taxonomic scope" value="Eukaryota"/>
</dbReference>
<dbReference type="GeneTree" id="ENSGT00390000012340"/>
<dbReference type="HOGENOM" id="CLU_046006_0_1_1"/>
<dbReference type="InParanoid" id="P50107"/>
<dbReference type="OMA" id="MGDAWGH"/>
<dbReference type="OrthoDB" id="16820at2759"/>
<dbReference type="BioCyc" id="MetaCyc:YML004C-MONOMER"/>
<dbReference type="BioCyc" id="YEAST:YML004C-MONOMER"/>
<dbReference type="Reactome" id="R-SCE-70268">
    <property type="pathway name" value="Pyruvate metabolism"/>
</dbReference>
<dbReference type="SABIO-RK" id="P50107"/>
<dbReference type="UniPathway" id="UPA00619">
    <property type="reaction ID" value="UER00675"/>
</dbReference>
<dbReference type="BioGRID-ORCS" id="855009">
    <property type="hits" value="0 hits in 10 CRISPR screens"/>
</dbReference>
<dbReference type="PRO" id="PR:P50107"/>
<dbReference type="Proteomes" id="UP000002311">
    <property type="component" value="Chromosome XIII"/>
</dbReference>
<dbReference type="RNAct" id="P50107">
    <property type="molecule type" value="protein"/>
</dbReference>
<dbReference type="GO" id="GO:0005737">
    <property type="term" value="C:cytoplasm"/>
    <property type="evidence" value="ECO:0007005"/>
    <property type="project" value="SGD"/>
</dbReference>
<dbReference type="GO" id="GO:0005634">
    <property type="term" value="C:nucleus"/>
    <property type="evidence" value="ECO:0007005"/>
    <property type="project" value="SGD"/>
</dbReference>
<dbReference type="GO" id="GO:0004462">
    <property type="term" value="F:lactoylglutathione lyase activity"/>
    <property type="evidence" value="ECO:0000315"/>
    <property type="project" value="SGD"/>
</dbReference>
<dbReference type="GO" id="GO:0046872">
    <property type="term" value="F:metal ion binding"/>
    <property type="evidence" value="ECO:0007669"/>
    <property type="project" value="UniProtKB-KW"/>
</dbReference>
<dbReference type="GO" id="GO:0006749">
    <property type="term" value="P:glutathione metabolic process"/>
    <property type="evidence" value="ECO:0000315"/>
    <property type="project" value="SGD"/>
</dbReference>
<dbReference type="GO" id="GO:0019243">
    <property type="term" value="P:methylglyoxal catabolic process to D-lactate via S-lactoyl-glutathione"/>
    <property type="evidence" value="ECO:0000314"/>
    <property type="project" value="SGD"/>
</dbReference>
<dbReference type="CDD" id="cd07233">
    <property type="entry name" value="GlxI_Zn"/>
    <property type="match status" value="2"/>
</dbReference>
<dbReference type="FunFam" id="3.10.180.10:FF:000026">
    <property type="entry name" value="Lactoylglutathione lyase"/>
    <property type="match status" value="2"/>
</dbReference>
<dbReference type="Gene3D" id="3.10.180.10">
    <property type="entry name" value="2,3-Dihydroxybiphenyl 1,2-Dioxygenase, domain 1"/>
    <property type="match status" value="2"/>
</dbReference>
<dbReference type="InterPro" id="IPR029068">
    <property type="entry name" value="Glyas_Bleomycin-R_OHBP_Dase"/>
</dbReference>
<dbReference type="InterPro" id="IPR004360">
    <property type="entry name" value="Glyas_Fos-R_dOase_dom"/>
</dbReference>
<dbReference type="InterPro" id="IPR004361">
    <property type="entry name" value="Glyoxalase_1"/>
</dbReference>
<dbReference type="InterPro" id="IPR018146">
    <property type="entry name" value="Glyoxalase_1_CS"/>
</dbReference>
<dbReference type="InterPro" id="IPR037523">
    <property type="entry name" value="VOC"/>
</dbReference>
<dbReference type="NCBIfam" id="TIGR00068">
    <property type="entry name" value="glyox_I"/>
    <property type="match status" value="2"/>
</dbReference>
<dbReference type="PANTHER" id="PTHR10374:SF30">
    <property type="entry name" value="LACTOYLGLUTATHIONE LYASE"/>
    <property type="match status" value="1"/>
</dbReference>
<dbReference type="PANTHER" id="PTHR10374">
    <property type="entry name" value="LACTOYLGLUTATHIONE LYASE GLYOXALASE I"/>
    <property type="match status" value="1"/>
</dbReference>
<dbReference type="Pfam" id="PF00903">
    <property type="entry name" value="Glyoxalase"/>
    <property type="match status" value="2"/>
</dbReference>
<dbReference type="SUPFAM" id="SSF54593">
    <property type="entry name" value="Glyoxalase/Bleomycin resistance protein/Dihydroxybiphenyl dioxygenase"/>
    <property type="match status" value="2"/>
</dbReference>
<dbReference type="PROSITE" id="PS00934">
    <property type="entry name" value="GLYOXALASE_I_1"/>
    <property type="match status" value="2"/>
</dbReference>
<dbReference type="PROSITE" id="PS00935">
    <property type="entry name" value="GLYOXALASE_I_2"/>
    <property type="match status" value="2"/>
</dbReference>
<dbReference type="PROSITE" id="PS51819">
    <property type="entry name" value="VOC"/>
    <property type="match status" value="2"/>
</dbReference>
<sequence>MSTDSTRYPIQIEKASNDPTLLLNHTCLRVKDPARTVKFYTEHFGMKLLSRKDFEEAKFSLYFLSFPKDDIPKNKNGEPDVFSAHGVLELTHNWGTEKNPDYKINNGNEEPHRGFGHICFSVSDINKTCEELESQGVKFKKRLSEGRQKDIAFALGPDGYWIELITYSREGQEYPKGSVGNKFNHTMIRIKNPTRSLEFYQNVLGMKLLRTSEHESAKFTLYFLGYGVPKTDSVFSCESVLELTHNWGTENDPNFHYHNGNSEPQGYGHICISCDDAGALCKEIEVKYGDKIQWSPKFNQGRMKNIAFLKDPDGYSIEVVPHGLIA</sequence>
<organism>
    <name type="scientific">Saccharomyces cerevisiae (strain ATCC 204508 / S288c)</name>
    <name type="common">Baker's yeast</name>
    <dbReference type="NCBI Taxonomy" id="559292"/>
    <lineage>
        <taxon>Eukaryota</taxon>
        <taxon>Fungi</taxon>
        <taxon>Dikarya</taxon>
        <taxon>Ascomycota</taxon>
        <taxon>Saccharomycotina</taxon>
        <taxon>Saccharomycetes</taxon>
        <taxon>Saccharomycetales</taxon>
        <taxon>Saccharomycetaceae</taxon>
        <taxon>Saccharomyces</taxon>
    </lineage>
</organism>